<feature type="chain" id="PRO_0000228957" description="Small ribosomal subunit protein uS4c">
    <location>
        <begin position="1"/>
        <end position="201"/>
    </location>
</feature>
<feature type="domain" description="S4 RNA-binding">
    <location>
        <begin position="89"/>
        <end position="151"/>
    </location>
</feature>
<feature type="region of interest" description="Disordered" evidence="2">
    <location>
        <begin position="15"/>
        <end position="44"/>
    </location>
</feature>
<proteinExistence type="inferred from homology"/>
<comment type="function">
    <text evidence="1">One of the primary rRNA binding proteins, it binds directly to 16S rRNA where it nucleates assembly of the body of the 30S subunit.</text>
</comment>
<comment type="function">
    <text evidence="1">With S5 and S12 plays an important role in translational accuracy.</text>
</comment>
<comment type="subunit">
    <text evidence="1">Part of the 30S ribosomal subunit. Contacts protein S5. The interaction surface between S4 and S5 is involved in control of translational fidelity (By similarity).</text>
</comment>
<comment type="subcellular location">
    <subcellularLocation>
        <location>Plastid</location>
        <location>Chloroplast</location>
    </subcellularLocation>
</comment>
<comment type="similarity">
    <text evidence="3">Belongs to the universal ribosomal protein uS4 family.</text>
</comment>
<geneLocation type="chloroplast"/>
<dbReference type="EMBL" id="DQ317523">
    <property type="protein sequence ID" value="ABC25113.1"/>
    <property type="molecule type" value="Genomic_DNA"/>
</dbReference>
<dbReference type="RefSeq" id="YP_538753.1">
    <property type="nucleotide sequence ID" value="NC_007942.1"/>
</dbReference>
<dbReference type="SMR" id="Q2PMU5"/>
<dbReference type="FunCoup" id="Q2PMU5">
    <property type="interactions" value="381"/>
</dbReference>
<dbReference type="STRING" id="3847.Q2PMU5"/>
<dbReference type="PaxDb" id="3847-GLYMA18G43353.1"/>
<dbReference type="GeneID" id="3989263"/>
<dbReference type="KEGG" id="gmx:3989263"/>
<dbReference type="eggNOG" id="KOG3301">
    <property type="taxonomic scope" value="Eukaryota"/>
</dbReference>
<dbReference type="InParanoid" id="Q2PMU5"/>
<dbReference type="Proteomes" id="UP000008827">
    <property type="component" value="Chloroplast"/>
</dbReference>
<dbReference type="GO" id="GO:0009507">
    <property type="term" value="C:chloroplast"/>
    <property type="evidence" value="ECO:0007669"/>
    <property type="project" value="UniProtKB-SubCell"/>
</dbReference>
<dbReference type="GO" id="GO:0015935">
    <property type="term" value="C:small ribosomal subunit"/>
    <property type="evidence" value="ECO:0000318"/>
    <property type="project" value="GO_Central"/>
</dbReference>
<dbReference type="GO" id="GO:0019843">
    <property type="term" value="F:rRNA binding"/>
    <property type="evidence" value="ECO:0000318"/>
    <property type="project" value="GO_Central"/>
</dbReference>
<dbReference type="GO" id="GO:0003735">
    <property type="term" value="F:structural constituent of ribosome"/>
    <property type="evidence" value="ECO:0000318"/>
    <property type="project" value="GO_Central"/>
</dbReference>
<dbReference type="GO" id="GO:0042274">
    <property type="term" value="P:ribosomal small subunit biogenesis"/>
    <property type="evidence" value="ECO:0000318"/>
    <property type="project" value="GO_Central"/>
</dbReference>
<dbReference type="GO" id="GO:0006412">
    <property type="term" value="P:translation"/>
    <property type="evidence" value="ECO:0007669"/>
    <property type="project" value="UniProtKB-UniRule"/>
</dbReference>
<dbReference type="CDD" id="cd00165">
    <property type="entry name" value="S4"/>
    <property type="match status" value="1"/>
</dbReference>
<dbReference type="FunFam" id="1.10.1050.10:FF:000002">
    <property type="entry name" value="30S ribosomal protein S4, chloroplastic"/>
    <property type="match status" value="1"/>
</dbReference>
<dbReference type="FunFam" id="3.10.290.10:FF:000081">
    <property type="entry name" value="30S ribosomal protein S4, chloroplastic"/>
    <property type="match status" value="1"/>
</dbReference>
<dbReference type="Gene3D" id="1.10.1050.10">
    <property type="entry name" value="Ribosomal Protein S4 Delta 41, Chain A, domain 1"/>
    <property type="match status" value="1"/>
</dbReference>
<dbReference type="Gene3D" id="3.10.290.10">
    <property type="entry name" value="RNA-binding S4 domain"/>
    <property type="match status" value="1"/>
</dbReference>
<dbReference type="HAMAP" id="MF_01306_B">
    <property type="entry name" value="Ribosomal_uS4_B"/>
    <property type="match status" value="1"/>
</dbReference>
<dbReference type="InterPro" id="IPR022801">
    <property type="entry name" value="Ribosomal_uS4"/>
</dbReference>
<dbReference type="InterPro" id="IPR005709">
    <property type="entry name" value="Ribosomal_uS4_bac-type"/>
</dbReference>
<dbReference type="InterPro" id="IPR018079">
    <property type="entry name" value="Ribosomal_uS4_CS"/>
</dbReference>
<dbReference type="InterPro" id="IPR001912">
    <property type="entry name" value="Ribosomal_uS4_N"/>
</dbReference>
<dbReference type="InterPro" id="IPR002942">
    <property type="entry name" value="S4_RNA-bd"/>
</dbReference>
<dbReference type="InterPro" id="IPR036986">
    <property type="entry name" value="S4_RNA-bd_sf"/>
</dbReference>
<dbReference type="NCBIfam" id="NF003717">
    <property type="entry name" value="PRK05327.1"/>
    <property type="match status" value="1"/>
</dbReference>
<dbReference type="NCBIfam" id="TIGR01017">
    <property type="entry name" value="rpsD_bact"/>
    <property type="match status" value="1"/>
</dbReference>
<dbReference type="PANTHER" id="PTHR11831">
    <property type="entry name" value="30S 40S RIBOSOMAL PROTEIN"/>
    <property type="match status" value="1"/>
</dbReference>
<dbReference type="PANTHER" id="PTHR11831:SF4">
    <property type="entry name" value="SMALL RIBOSOMAL SUBUNIT PROTEIN US4M"/>
    <property type="match status" value="1"/>
</dbReference>
<dbReference type="Pfam" id="PF00163">
    <property type="entry name" value="Ribosomal_S4"/>
    <property type="match status" value="1"/>
</dbReference>
<dbReference type="Pfam" id="PF01479">
    <property type="entry name" value="S4"/>
    <property type="match status" value="1"/>
</dbReference>
<dbReference type="SMART" id="SM01390">
    <property type="entry name" value="Ribosomal_S4"/>
    <property type="match status" value="1"/>
</dbReference>
<dbReference type="SMART" id="SM00363">
    <property type="entry name" value="S4"/>
    <property type="match status" value="1"/>
</dbReference>
<dbReference type="SUPFAM" id="SSF55174">
    <property type="entry name" value="Alpha-L RNA-binding motif"/>
    <property type="match status" value="1"/>
</dbReference>
<dbReference type="PROSITE" id="PS00632">
    <property type="entry name" value="RIBOSOMAL_S4"/>
    <property type="match status" value="1"/>
</dbReference>
<dbReference type="PROSITE" id="PS50889">
    <property type="entry name" value="S4"/>
    <property type="match status" value="1"/>
</dbReference>
<protein>
    <recommendedName>
        <fullName evidence="3">Small ribosomal subunit protein uS4c</fullName>
    </recommendedName>
    <alternativeName>
        <fullName>30S ribosomal protein S4, chloroplastic</fullName>
    </alternativeName>
</protein>
<evidence type="ECO:0000250" key="1"/>
<evidence type="ECO:0000256" key="2">
    <source>
        <dbReference type="SAM" id="MobiDB-lite"/>
    </source>
</evidence>
<evidence type="ECO:0000305" key="3"/>
<sequence>MSRYRGPRFKKIRRLGSLPGLTSKRPTVKSELRNQSRSSKKSQYRIRLEEKQKLRFHYGLTERQLLKYVRIAGKAKGSTGQVLLQLLEMRLDNILFRLGMAATIPQARQLINHRHVLVNGHIVDIPSYRCKPQDIITAKDEQKSKTLIQNYLDSAPREKLPNHLTLHPFQYKGLINQIIDNKWVGLKINELLVVEYYSRQT</sequence>
<keyword id="KW-0150">Chloroplast</keyword>
<keyword id="KW-0934">Plastid</keyword>
<keyword id="KW-1185">Reference proteome</keyword>
<keyword id="KW-0687">Ribonucleoprotein</keyword>
<keyword id="KW-0689">Ribosomal protein</keyword>
<keyword id="KW-0694">RNA-binding</keyword>
<keyword id="KW-0699">rRNA-binding</keyword>
<name>RR4_SOYBN</name>
<organism>
    <name type="scientific">Glycine max</name>
    <name type="common">Soybean</name>
    <name type="synonym">Glycine hispida</name>
    <dbReference type="NCBI Taxonomy" id="3847"/>
    <lineage>
        <taxon>Eukaryota</taxon>
        <taxon>Viridiplantae</taxon>
        <taxon>Streptophyta</taxon>
        <taxon>Embryophyta</taxon>
        <taxon>Tracheophyta</taxon>
        <taxon>Spermatophyta</taxon>
        <taxon>Magnoliopsida</taxon>
        <taxon>eudicotyledons</taxon>
        <taxon>Gunneridae</taxon>
        <taxon>Pentapetalae</taxon>
        <taxon>rosids</taxon>
        <taxon>fabids</taxon>
        <taxon>Fabales</taxon>
        <taxon>Fabaceae</taxon>
        <taxon>Papilionoideae</taxon>
        <taxon>50 kb inversion clade</taxon>
        <taxon>NPAAA clade</taxon>
        <taxon>indigoferoid/millettioid clade</taxon>
        <taxon>Phaseoleae</taxon>
        <taxon>Glycine</taxon>
        <taxon>Glycine subgen. Soja</taxon>
    </lineage>
</organism>
<accession>Q2PMU5</accession>
<reference key="1">
    <citation type="journal article" date="2005" name="Plant Mol. Biol.">
        <title>Complete chloroplast genome sequence of Glycine max and comparative analyses with other legume genomes.</title>
        <authorList>
            <person name="Saski C."/>
            <person name="Lee S.-B."/>
            <person name="Daniell H."/>
            <person name="Wood T.C."/>
            <person name="Tomkins J."/>
            <person name="Kim H.-G."/>
            <person name="Jansen R.K."/>
        </authorList>
    </citation>
    <scope>NUCLEOTIDE SEQUENCE [LARGE SCALE GENOMIC DNA]</scope>
    <source>
        <strain>cv. PI 437654</strain>
    </source>
</reference>
<gene>
    <name type="primary">rps4</name>
</gene>